<name>RSMH_LIMF3</name>
<keyword id="KW-0963">Cytoplasm</keyword>
<keyword id="KW-0489">Methyltransferase</keyword>
<keyword id="KW-1185">Reference proteome</keyword>
<keyword id="KW-0698">rRNA processing</keyword>
<keyword id="KW-0949">S-adenosyl-L-methionine</keyword>
<keyword id="KW-0808">Transferase</keyword>
<feature type="chain" id="PRO_0000386944" description="Ribosomal RNA small subunit methyltransferase H">
    <location>
        <begin position="1"/>
        <end position="314"/>
    </location>
</feature>
<feature type="binding site" evidence="1">
    <location>
        <begin position="34"/>
        <end position="36"/>
    </location>
    <ligand>
        <name>S-adenosyl-L-methionine</name>
        <dbReference type="ChEBI" id="CHEBI:59789"/>
    </ligand>
</feature>
<feature type="binding site" evidence="1">
    <location>
        <position position="53"/>
    </location>
    <ligand>
        <name>S-adenosyl-L-methionine</name>
        <dbReference type="ChEBI" id="CHEBI:59789"/>
    </ligand>
</feature>
<feature type="binding site" evidence="1">
    <location>
        <position position="82"/>
    </location>
    <ligand>
        <name>S-adenosyl-L-methionine</name>
        <dbReference type="ChEBI" id="CHEBI:59789"/>
    </ligand>
</feature>
<feature type="binding site" evidence="1">
    <location>
        <position position="103"/>
    </location>
    <ligand>
        <name>S-adenosyl-L-methionine</name>
        <dbReference type="ChEBI" id="CHEBI:59789"/>
    </ligand>
</feature>
<feature type="binding site" evidence="1">
    <location>
        <position position="110"/>
    </location>
    <ligand>
        <name>S-adenosyl-L-methionine</name>
        <dbReference type="ChEBI" id="CHEBI:59789"/>
    </ligand>
</feature>
<accession>B2GB73</accession>
<reference key="1">
    <citation type="journal article" date="2008" name="DNA Res.">
        <title>Comparative genome analysis of Lactobacillus reuteri and Lactobacillus fermentum reveal a genomic island for reuterin and cobalamin production.</title>
        <authorList>
            <person name="Morita H."/>
            <person name="Toh H."/>
            <person name="Fukuda S."/>
            <person name="Horikawa H."/>
            <person name="Oshima K."/>
            <person name="Suzuki T."/>
            <person name="Murakami M."/>
            <person name="Hisamatsu S."/>
            <person name="Kato Y."/>
            <person name="Takizawa T."/>
            <person name="Fukuoka H."/>
            <person name="Yoshimura T."/>
            <person name="Itoh K."/>
            <person name="O'Sullivan D.J."/>
            <person name="McKay L.L."/>
            <person name="Ohno H."/>
            <person name="Kikuchi J."/>
            <person name="Masaoka T."/>
            <person name="Hattori M."/>
        </authorList>
    </citation>
    <scope>NUCLEOTIDE SEQUENCE [LARGE SCALE GENOMIC DNA]</scope>
    <source>
        <strain>NBRC 3956 / LMG 18251</strain>
    </source>
</reference>
<evidence type="ECO:0000255" key="1">
    <source>
        <dbReference type="HAMAP-Rule" id="MF_01007"/>
    </source>
</evidence>
<sequence>MAEFNHVTVLLHEAVAGLAIQPAGVYVDATLGGGGHSGEILKQLTSGHLYSFDQDETAIHYNQANLGPAIEEGKLTLMQTNFRNLKQALADQGVTAIDGIVYDLGVSSPQFDDAKRGFSYQHDAPLDMRMNQDQPLSAYQVVNEWSYQELVRILYRYGEEKFAKQIARAIERARQKQPIQTTMELANIVKEAIPAAARRHGGHPAKKSFQAIRIAVNDELGALEDSLEQALALLKVGGRISVITFQSLEDRLVKTMFKEATSLPDLPPGLPVIPADAQPDFKLINKKPVLPTEDELKVNHRAHSAKLRVIERLK</sequence>
<protein>
    <recommendedName>
        <fullName evidence="1">Ribosomal RNA small subunit methyltransferase H</fullName>
        <ecNumber evidence="1">2.1.1.199</ecNumber>
    </recommendedName>
    <alternativeName>
        <fullName evidence="1">16S rRNA m(4)C1402 methyltransferase</fullName>
    </alternativeName>
    <alternativeName>
        <fullName evidence="1">rRNA (cytosine-N(4)-)-methyltransferase RsmH</fullName>
    </alternativeName>
</protein>
<proteinExistence type="inferred from homology"/>
<organism>
    <name type="scientific">Limosilactobacillus fermentum (strain NBRC 3956 / LMG 18251)</name>
    <name type="common">Lactobacillus fermentum</name>
    <dbReference type="NCBI Taxonomy" id="334390"/>
    <lineage>
        <taxon>Bacteria</taxon>
        <taxon>Bacillati</taxon>
        <taxon>Bacillota</taxon>
        <taxon>Bacilli</taxon>
        <taxon>Lactobacillales</taxon>
        <taxon>Lactobacillaceae</taxon>
        <taxon>Limosilactobacillus</taxon>
    </lineage>
</organism>
<gene>
    <name evidence="1" type="primary">rsmH</name>
    <name type="synonym">mraW</name>
    <name type="ordered locus">LAF_0569</name>
</gene>
<comment type="function">
    <text evidence="1">Specifically methylates the N4 position of cytidine in position 1402 (C1402) of 16S rRNA.</text>
</comment>
<comment type="catalytic activity">
    <reaction evidence="1">
        <text>cytidine(1402) in 16S rRNA + S-adenosyl-L-methionine = N(4)-methylcytidine(1402) in 16S rRNA + S-adenosyl-L-homocysteine + H(+)</text>
        <dbReference type="Rhea" id="RHEA:42928"/>
        <dbReference type="Rhea" id="RHEA-COMP:10286"/>
        <dbReference type="Rhea" id="RHEA-COMP:10287"/>
        <dbReference type="ChEBI" id="CHEBI:15378"/>
        <dbReference type="ChEBI" id="CHEBI:57856"/>
        <dbReference type="ChEBI" id="CHEBI:59789"/>
        <dbReference type="ChEBI" id="CHEBI:74506"/>
        <dbReference type="ChEBI" id="CHEBI:82748"/>
        <dbReference type="EC" id="2.1.1.199"/>
    </reaction>
</comment>
<comment type="subcellular location">
    <subcellularLocation>
        <location evidence="1">Cytoplasm</location>
    </subcellularLocation>
</comment>
<comment type="similarity">
    <text evidence="1">Belongs to the methyltransferase superfamily. RsmH family.</text>
</comment>
<dbReference type="EC" id="2.1.1.199" evidence="1"/>
<dbReference type="EMBL" id="AP008937">
    <property type="protein sequence ID" value="BAG26905.1"/>
    <property type="molecule type" value="Genomic_DNA"/>
</dbReference>
<dbReference type="RefSeq" id="WP_003682143.1">
    <property type="nucleotide sequence ID" value="NC_010610.1"/>
</dbReference>
<dbReference type="SMR" id="B2GB73"/>
<dbReference type="GeneID" id="83715097"/>
<dbReference type="KEGG" id="lfe:LAF_0569"/>
<dbReference type="eggNOG" id="COG0275">
    <property type="taxonomic scope" value="Bacteria"/>
</dbReference>
<dbReference type="HOGENOM" id="CLU_038422_2_0_9"/>
<dbReference type="Proteomes" id="UP000001697">
    <property type="component" value="Chromosome"/>
</dbReference>
<dbReference type="GO" id="GO:0005737">
    <property type="term" value="C:cytoplasm"/>
    <property type="evidence" value="ECO:0007669"/>
    <property type="project" value="UniProtKB-SubCell"/>
</dbReference>
<dbReference type="GO" id="GO:0071424">
    <property type="term" value="F:rRNA (cytosine-N4-)-methyltransferase activity"/>
    <property type="evidence" value="ECO:0007669"/>
    <property type="project" value="UniProtKB-UniRule"/>
</dbReference>
<dbReference type="GO" id="GO:0070475">
    <property type="term" value="P:rRNA base methylation"/>
    <property type="evidence" value="ECO:0007669"/>
    <property type="project" value="UniProtKB-UniRule"/>
</dbReference>
<dbReference type="FunFam" id="1.10.150.170:FF:000001">
    <property type="entry name" value="Ribosomal RNA small subunit methyltransferase H"/>
    <property type="match status" value="1"/>
</dbReference>
<dbReference type="Gene3D" id="1.10.150.170">
    <property type="entry name" value="Putative methyltransferase TM0872, insert domain"/>
    <property type="match status" value="1"/>
</dbReference>
<dbReference type="Gene3D" id="3.40.50.150">
    <property type="entry name" value="Vaccinia Virus protein VP39"/>
    <property type="match status" value="1"/>
</dbReference>
<dbReference type="HAMAP" id="MF_01007">
    <property type="entry name" value="16SrRNA_methyltr_H"/>
    <property type="match status" value="1"/>
</dbReference>
<dbReference type="InterPro" id="IPR002903">
    <property type="entry name" value="RsmH"/>
</dbReference>
<dbReference type="InterPro" id="IPR023397">
    <property type="entry name" value="SAM-dep_MeTrfase_MraW_recog"/>
</dbReference>
<dbReference type="InterPro" id="IPR029063">
    <property type="entry name" value="SAM-dependent_MTases_sf"/>
</dbReference>
<dbReference type="NCBIfam" id="TIGR00006">
    <property type="entry name" value="16S rRNA (cytosine(1402)-N(4))-methyltransferase RsmH"/>
    <property type="match status" value="1"/>
</dbReference>
<dbReference type="PANTHER" id="PTHR11265:SF0">
    <property type="entry name" value="12S RRNA N4-METHYLCYTIDINE METHYLTRANSFERASE"/>
    <property type="match status" value="1"/>
</dbReference>
<dbReference type="PANTHER" id="PTHR11265">
    <property type="entry name" value="S-ADENOSYL-METHYLTRANSFERASE MRAW"/>
    <property type="match status" value="1"/>
</dbReference>
<dbReference type="Pfam" id="PF01795">
    <property type="entry name" value="Methyltransf_5"/>
    <property type="match status" value="1"/>
</dbReference>
<dbReference type="PIRSF" id="PIRSF004486">
    <property type="entry name" value="MraW"/>
    <property type="match status" value="1"/>
</dbReference>
<dbReference type="SUPFAM" id="SSF81799">
    <property type="entry name" value="Putative methyltransferase TM0872, insert domain"/>
    <property type="match status" value="1"/>
</dbReference>
<dbReference type="SUPFAM" id="SSF53335">
    <property type="entry name" value="S-adenosyl-L-methionine-dependent methyltransferases"/>
    <property type="match status" value="1"/>
</dbReference>